<accession>Q2GL93</accession>
<keyword id="KW-0143">Chaperone</keyword>
<keyword id="KW-0963">Cytoplasm</keyword>
<dbReference type="EMBL" id="CP000235">
    <property type="protein sequence ID" value="ABD43865.1"/>
    <property type="molecule type" value="Genomic_DNA"/>
</dbReference>
<dbReference type="RefSeq" id="WP_011450381.1">
    <property type="nucleotide sequence ID" value="NC_007797.1"/>
</dbReference>
<dbReference type="SMR" id="Q2GL93"/>
<dbReference type="STRING" id="212042.APH_0241"/>
<dbReference type="PaxDb" id="212042-APH_0241"/>
<dbReference type="EnsemblBacteria" id="ABD43865">
    <property type="protein sequence ID" value="ABD43865"/>
    <property type="gene ID" value="APH_0241"/>
</dbReference>
<dbReference type="KEGG" id="aph:APH_0241"/>
<dbReference type="eggNOG" id="COG0234">
    <property type="taxonomic scope" value="Bacteria"/>
</dbReference>
<dbReference type="HOGENOM" id="CLU_132825_1_0_5"/>
<dbReference type="Proteomes" id="UP000001943">
    <property type="component" value="Chromosome"/>
</dbReference>
<dbReference type="GO" id="GO:0005737">
    <property type="term" value="C:cytoplasm"/>
    <property type="evidence" value="ECO:0007669"/>
    <property type="project" value="UniProtKB-SubCell"/>
</dbReference>
<dbReference type="GO" id="GO:0005524">
    <property type="term" value="F:ATP binding"/>
    <property type="evidence" value="ECO:0007669"/>
    <property type="project" value="InterPro"/>
</dbReference>
<dbReference type="GO" id="GO:0046872">
    <property type="term" value="F:metal ion binding"/>
    <property type="evidence" value="ECO:0007669"/>
    <property type="project" value="TreeGrafter"/>
</dbReference>
<dbReference type="GO" id="GO:0044183">
    <property type="term" value="F:protein folding chaperone"/>
    <property type="evidence" value="ECO:0007669"/>
    <property type="project" value="InterPro"/>
</dbReference>
<dbReference type="GO" id="GO:0051087">
    <property type="term" value="F:protein-folding chaperone binding"/>
    <property type="evidence" value="ECO:0007669"/>
    <property type="project" value="TreeGrafter"/>
</dbReference>
<dbReference type="GO" id="GO:0051082">
    <property type="term" value="F:unfolded protein binding"/>
    <property type="evidence" value="ECO:0007669"/>
    <property type="project" value="TreeGrafter"/>
</dbReference>
<dbReference type="GO" id="GO:0051085">
    <property type="term" value="P:chaperone cofactor-dependent protein refolding"/>
    <property type="evidence" value="ECO:0007669"/>
    <property type="project" value="TreeGrafter"/>
</dbReference>
<dbReference type="CDD" id="cd00320">
    <property type="entry name" value="cpn10"/>
    <property type="match status" value="1"/>
</dbReference>
<dbReference type="FunFam" id="2.30.33.40:FF:000001">
    <property type="entry name" value="10 kDa chaperonin"/>
    <property type="match status" value="1"/>
</dbReference>
<dbReference type="Gene3D" id="2.30.33.40">
    <property type="entry name" value="GroES chaperonin"/>
    <property type="match status" value="1"/>
</dbReference>
<dbReference type="HAMAP" id="MF_00580">
    <property type="entry name" value="CH10"/>
    <property type="match status" value="1"/>
</dbReference>
<dbReference type="InterPro" id="IPR020818">
    <property type="entry name" value="Chaperonin_GroES"/>
</dbReference>
<dbReference type="InterPro" id="IPR037124">
    <property type="entry name" value="Chaperonin_GroES_sf"/>
</dbReference>
<dbReference type="InterPro" id="IPR011032">
    <property type="entry name" value="GroES-like_sf"/>
</dbReference>
<dbReference type="NCBIfam" id="NF001533">
    <property type="entry name" value="PRK00364.2-4"/>
    <property type="match status" value="1"/>
</dbReference>
<dbReference type="PANTHER" id="PTHR10772">
    <property type="entry name" value="10 KDA HEAT SHOCK PROTEIN"/>
    <property type="match status" value="1"/>
</dbReference>
<dbReference type="PANTHER" id="PTHR10772:SF63">
    <property type="entry name" value="20 KDA CHAPERONIN, CHLOROPLASTIC"/>
    <property type="match status" value="1"/>
</dbReference>
<dbReference type="Pfam" id="PF00166">
    <property type="entry name" value="Cpn10"/>
    <property type="match status" value="1"/>
</dbReference>
<dbReference type="PRINTS" id="PR00297">
    <property type="entry name" value="CHAPERONIN10"/>
</dbReference>
<dbReference type="SMART" id="SM00883">
    <property type="entry name" value="Cpn10"/>
    <property type="match status" value="1"/>
</dbReference>
<dbReference type="SUPFAM" id="SSF50129">
    <property type="entry name" value="GroES-like"/>
    <property type="match status" value="1"/>
</dbReference>
<feature type="chain" id="PRO_1000025204" description="Co-chaperonin GroES">
    <location>
        <begin position="1"/>
        <end position="94"/>
    </location>
</feature>
<feature type="region of interest" description="Disordered" evidence="2">
    <location>
        <begin position="17"/>
        <end position="53"/>
    </location>
</feature>
<name>CH10_ANAPZ</name>
<sequence length="94" mass="10179">MNLAMLHDNVLVEALEDSNPNSPIQLPDSAKKKPTKGKVVSVGPGASNSDGKVTPMSVKVGDCVYYRQWAGNEIEFDGKKFIVMKESDIIAKEA</sequence>
<proteinExistence type="inferred from homology"/>
<comment type="function">
    <text evidence="1">Together with the chaperonin GroEL, plays an essential role in assisting protein folding. The GroEL-GroES system forms a nano-cage that allows encapsulation of the non-native substrate proteins and provides a physical environment optimized to promote and accelerate protein folding. GroES binds to the apical surface of the GroEL ring, thereby capping the opening of the GroEL channel.</text>
</comment>
<comment type="subunit">
    <text evidence="1">Heptamer of 7 subunits arranged in a ring. Interacts with the chaperonin GroEL.</text>
</comment>
<comment type="subcellular location">
    <subcellularLocation>
        <location evidence="1">Cytoplasm</location>
    </subcellularLocation>
</comment>
<comment type="similarity">
    <text evidence="1">Belongs to the GroES chaperonin family.</text>
</comment>
<reference key="1">
    <citation type="journal article" date="2006" name="PLoS Genet.">
        <title>Comparative genomics of emerging human ehrlichiosis agents.</title>
        <authorList>
            <person name="Dunning Hotopp J.C."/>
            <person name="Lin M."/>
            <person name="Madupu R."/>
            <person name="Crabtree J."/>
            <person name="Angiuoli S.V."/>
            <person name="Eisen J.A."/>
            <person name="Seshadri R."/>
            <person name="Ren Q."/>
            <person name="Wu M."/>
            <person name="Utterback T.R."/>
            <person name="Smith S."/>
            <person name="Lewis M."/>
            <person name="Khouri H."/>
            <person name="Zhang C."/>
            <person name="Niu H."/>
            <person name="Lin Q."/>
            <person name="Ohashi N."/>
            <person name="Zhi N."/>
            <person name="Nelson W.C."/>
            <person name="Brinkac L.M."/>
            <person name="Dodson R.J."/>
            <person name="Rosovitz M.J."/>
            <person name="Sundaram J.P."/>
            <person name="Daugherty S.C."/>
            <person name="Davidsen T."/>
            <person name="Durkin A.S."/>
            <person name="Gwinn M.L."/>
            <person name="Haft D.H."/>
            <person name="Selengut J.D."/>
            <person name="Sullivan S.A."/>
            <person name="Zafar N."/>
            <person name="Zhou L."/>
            <person name="Benahmed F."/>
            <person name="Forberger H."/>
            <person name="Halpin R."/>
            <person name="Mulligan S."/>
            <person name="Robinson J."/>
            <person name="White O."/>
            <person name="Rikihisa Y."/>
            <person name="Tettelin H."/>
        </authorList>
    </citation>
    <scope>NUCLEOTIDE SEQUENCE [LARGE SCALE GENOMIC DNA]</scope>
    <source>
        <strain>HZ</strain>
    </source>
</reference>
<evidence type="ECO:0000255" key="1">
    <source>
        <dbReference type="HAMAP-Rule" id="MF_00580"/>
    </source>
</evidence>
<evidence type="ECO:0000256" key="2">
    <source>
        <dbReference type="SAM" id="MobiDB-lite"/>
    </source>
</evidence>
<organism>
    <name type="scientific">Anaplasma phagocytophilum (strain HZ)</name>
    <dbReference type="NCBI Taxonomy" id="212042"/>
    <lineage>
        <taxon>Bacteria</taxon>
        <taxon>Pseudomonadati</taxon>
        <taxon>Pseudomonadota</taxon>
        <taxon>Alphaproteobacteria</taxon>
        <taxon>Rickettsiales</taxon>
        <taxon>Anaplasmataceae</taxon>
        <taxon>Anaplasma</taxon>
        <taxon>phagocytophilum group</taxon>
    </lineage>
</organism>
<gene>
    <name evidence="1" type="primary">groES</name>
    <name evidence="1" type="synonym">groS</name>
    <name type="ordered locus">APH_0241</name>
</gene>
<protein>
    <recommendedName>
        <fullName evidence="1">Co-chaperonin GroES</fullName>
    </recommendedName>
    <alternativeName>
        <fullName evidence="1">10 kDa chaperonin</fullName>
    </alternativeName>
    <alternativeName>
        <fullName evidence="1">Chaperonin-10</fullName>
        <shortName evidence="1">Cpn10</shortName>
    </alternativeName>
</protein>